<name>FSHR_MOUSE</name>
<comment type="function">
    <text evidence="3">G protein-coupled receptor for follitropin, the follicle-stimulating hormone. Through cAMP production activates the downstream PI3K-AKT and ERK1/ERK2 signaling pathways.</text>
</comment>
<comment type="subunit">
    <text evidence="3">Homotrimer. Functions as a homotrimer binding the FSH hormone heterodimer composed of CGA and FSHB (By similarity). Interacts with ARRB2 (By similarity). Interacts with APPL2; interaction is independent of follicle stimulating hormone stimulation (By similarity).</text>
</comment>
<comment type="subcellular location">
    <subcellularLocation>
        <location evidence="3">Cell membrane</location>
        <topology evidence="3">Multi-pass membrane protein</topology>
    </subcellularLocation>
</comment>
<comment type="PTM">
    <text evidence="2">N-glycosylated; indirectly required for FSH-binding, possibly via a conformational change that allows high affinity binding of hormone.</text>
</comment>
<comment type="PTM">
    <text evidence="3">Sulfated.</text>
</comment>
<comment type="similarity">
    <text evidence="5">Belongs to the G-protein coupled receptor 1 family. FSH/LSH/TSH subfamily.</text>
</comment>
<reference key="1">
    <citation type="journal article" date="1999" name="Biol. Reprod.">
        <title>Molecular cloning of the mouse follicle-stimulating hormone receptor complementary deoxyribonucleic acid: functional expression of alternatively spliced variants and receptor inactivation by a C566T transition in exon 7 of the coding sequence.</title>
        <authorList>
            <person name="Tena-Sempere M."/>
            <person name="Manna P.R."/>
            <person name="Huhtaniemi I.T."/>
        </authorList>
    </citation>
    <scope>NUCLEOTIDE SEQUENCE</scope>
    <source>
        <strain>129/Sv</strain>
        <tissue>Testis</tissue>
    </source>
</reference>
<reference key="2">
    <citation type="journal article" date="2005" name="Science">
        <title>The transcriptional landscape of the mammalian genome.</title>
        <authorList>
            <person name="Carninci P."/>
            <person name="Kasukawa T."/>
            <person name="Katayama S."/>
            <person name="Gough J."/>
            <person name="Frith M.C."/>
            <person name="Maeda N."/>
            <person name="Oyama R."/>
            <person name="Ravasi T."/>
            <person name="Lenhard B."/>
            <person name="Wells C."/>
            <person name="Kodzius R."/>
            <person name="Shimokawa K."/>
            <person name="Bajic V.B."/>
            <person name="Brenner S.E."/>
            <person name="Batalov S."/>
            <person name="Forrest A.R."/>
            <person name="Zavolan M."/>
            <person name="Davis M.J."/>
            <person name="Wilming L.G."/>
            <person name="Aidinis V."/>
            <person name="Allen J.E."/>
            <person name="Ambesi-Impiombato A."/>
            <person name="Apweiler R."/>
            <person name="Aturaliya R.N."/>
            <person name="Bailey T.L."/>
            <person name="Bansal M."/>
            <person name="Baxter L."/>
            <person name="Beisel K.W."/>
            <person name="Bersano T."/>
            <person name="Bono H."/>
            <person name="Chalk A.M."/>
            <person name="Chiu K.P."/>
            <person name="Choudhary V."/>
            <person name="Christoffels A."/>
            <person name="Clutterbuck D.R."/>
            <person name="Crowe M.L."/>
            <person name="Dalla E."/>
            <person name="Dalrymple B.P."/>
            <person name="de Bono B."/>
            <person name="Della Gatta G."/>
            <person name="di Bernardo D."/>
            <person name="Down T."/>
            <person name="Engstrom P."/>
            <person name="Fagiolini M."/>
            <person name="Faulkner G."/>
            <person name="Fletcher C.F."/>
            <person name="Fukushima T."/>
            <person name="Furuno M."/>
            <person name="Futaki S."/>
            <person name="Gariboldi M."/>
            <person name="Georgii-Hemming P."/>
            <person name="Gingeras T.R."/>
            <person name="Gojobori T."/>
            <person name="Green R.E."/>
            <person name="Gustincich S."/>
            <person name="Harbers M."/>
            <person name="Hayashi Y."/>
            <person name="Hensch T.K."/>
            <person name="Hirokawa N."/>
            <person name="Hill D."/>
            <person name="Huminiecki L."/>
            <person name="Iacono M."/>
            <person name="Ikeo K."/>
            <person name="Iwama A."/>
            <person name="Ishikawa T."/>
            <person name="Jakt M."/>
            <person name="Kanapin A."/>
            <person name="Katoh M."/>
            <person name="Kawasawa Y."/>
            <person name="Kelso J."/>
            <person name="Kitamura H."/>
            <person name="Kitano H."/>
            <person name="Kollias G."/>
            <person name="Krishnan S.P."/>
            <person name="Kruger A."/>
            <person name="Kummerfeld S.K."/>
            <person name="Kurochkin I.V."/>
            <person name="Lareau L.F."/>
            <person name="Lazarevic D."/>
            <person name="Lipovich L."/>
            <person name="Liu J."/>
            <person name="Liuni S."/>
            <person name="McWilliam S."/>
            <person name="Madan Babu M."/>
            <person name="Madera M."/>
            <person name="Marchionni L."/>
            <person name="Matsuda H."/>
            <person name="Matsuzawa S."/>
            <person name="Miki H."/>
            <person name="Mignone F."/>
            <person name="Miyake S."/>
            <person name="Morris K."/>
            <person name="Mottagui-Tabar S."/>
            <person name="Mulder N."/>
            <person name="Nakano N."/>
            <person name="Nakauchi H."/>
            <person name="Ng P."/>
            <person name="Nilsson R."/>
            <person name="Nishiguchi S."/>
            <person name="Nishikawa S."/>
            <person name="Nori F."/>
            <person name="Ohara O."/>
            <person name="Okazaki Y."/>
            <person name="Orlando V."/>
            <person name="Pang K.C."/>
            <person name="Pavan W.J."/>
            <person name="Pavesi G."/>
            <person name="Pesole G."/>
            <person name="Petrovsky N."/>
            <person name="Piazza S."/>
            <person name="Reed J."/>
            <person name="Reid J.F."/>
            <person name="Ring B.Z."/>
            <person name="Ringwald M."/>
            <person name="Rost B."/>
            <person name="Ruan Y."/>
            <person name="Salzberg S.L."/>
            <person name="Sandelin A."/>
            <person name="Schneider C."/>
            <person name="Schoenbach C."/>
            <person name="Sekiguchi K."/>
            <person name="Semple C.A."/>
            <person name="Seno S."/>
            <person name="Sessa L."/>
            <person name="Sheng Y."/>
            <person name="Shibata Y."/>
            <person name="Shimada H."/>
            <person name="Shimada K."/>
            <person name="Silva D."/>
            <person name="Sinclair B."/>
            <person name="Sperling S."/>
            <person name="Stupka E."/>
            <person name="Sugiura K."/>
            <person name="Sultana R."/>
            <person name="Takenaka Y."/>
            <person name="Taki K."/>
            <person name="Tammoja K."/>
            <person name="Tan S.L."/>
            <person name="Tang S."/>
            <person name="Taylor M.S."/>
            <person name="Tegner J."/>
            <person name="Teichmann S.A."/>
            <person name="Ueda H.R."/>
            <person name="van Nimwegen E."/>
            <person name="Verardo R."/>
            <person name="Wei C.L."/>
            <person name="Yagi K."/>
            <person name="Yamanishi H."/>
            <person name="Zabarovsky E."/>
            <person name="Zhu S."/>
            <person name="Zimmer A."/>
            <person name="Hide W."/>
            <person name="Bult C."/>
            <person name="Grimmond S.M."/>
            <person name="Teasdale R.D."/>
            <person name="Liu E.T."/>
            <person name="Brusic V."/>
            <person name="Quackenbush J."/>
            <person name="Wahlestedt C."/>
            <person name="Mattick J.S."/>
            <person name="Hume D.A."/>
            <person name="Kai C."/>
            <person name="Sasaki D."/>
            <person name="Tomaru Y."/>
            <person name="Fukuda S."/>
            <person name="Kanamori-Katayama M."/>
            <person name="Suzuki M."/>
            <person name="Aoki J."/>
            <person name="Arakawa T."/>
            <person name="Iida J."/>
            <person name="Imamura K."/>
            <person name="Itoh M."/>
            <person name="Kato T."/>
            <person name="Kawaji H."/>
            <person name="Kawagashira N."/>
            <person name="Kawashima T."/>
            <person name="Kojima M."/>
            <person name="Kondo S."/>
            <person name="Konno H."/>
            <person name="Nakano K."/>
            <person name="Ninomiya N."/>
            <person name="Nishio T."/>
            <person name="Okada M."/>
            <person name="Plessy C."/>
            <person name="Shibata K."/>
            <person name="Shiraki T."/>
            <person name="Suzuki S."/>
            <person name="Tagami M."/>
            <person name="Waki K."/>
            <person name="Watahiki A."/>
            <person name="Okamura-Oho Y."/>
            <person name="Suzuki H."/>
            <person name="Kawai J."/>
            <person name="Hayashizaki Y."/>
        </authorList>
    </citation>
    <scope>NUCLEOTIDE SEQUENCE [LARGE SCALE MRNA]</scope>
    <source>
        <strain>C57BL/6J</strain>
        <tissue>Testis</tissue>
    </source>
</reference>
<reference key="3">
    <citation type="journal article" date="1992" name="Mol. Cell. Endocrinol.">
        <title>The murine luteinizing hormone and follicle-stimulating hormone receptor genes: transcription initiation sites, putative promoter sequences and promoter activity.</title>
        <authorList>
            <person name="Huhtaniemi I.T."/>
            <person name="Eskola V."/>
            <person name="Pakarinen P."/>
            <person name="Matikainen T."/>
            <person name="Sprengel R."/>
        </authorList>
    </citation>
    <scope>NUCLEOTIDE SEQUENCE OF 1-51</scope>
</reference>
<sequence length="692" mass="77769">MALLLVSLLAFLGSGSGCHHWLCHCSNRVFLCQDSKVTEIPPDLPRNAIELRFVLTKLRVIPKGSFSGFGDLEKIEISQNDVLEVIEADVFSNLPNLHEIRIEKANNLLYINPEAFQNLPSLRYLLISNTGIKHLPAFHKIQSLQKVLLDIQDNINIHIIARNSFMGLSFESVILWLNKNGIQEIHNCAFNGTQLDELNLSDNNNLEELPDDVFQGASGPVVLDISRTKVYSLPNHGLENLKKLRARSTYRLKKLPSLDKFVMLIEASLTYPSHCCAFANWRRQTSELHPICNKSISRQDIDDMTQPGDQRVSLVDDEPSYGKGSDMLYSEFDYDLCNEFVDVTCSPKPDAFNPCEDIMGYNILRVLIWFISILAITGNTTVLVVLTTSQYKLTVPRFLMCNLAFADLCIGIYLLLIASVDIHTKSQYHNYAIDWQTGAGCDAAGFFTVFASELSVYTLAAITLERWHTITHAMQLECKVQLCHAASIMVLGWAFAFAAALFPIFGISSYMKVSICLPMDIDSPLSQLYVMALLVLNALAFVVICGCYTHIYLTVRNPNIVSSSRDTKIAKRMATLIFTDFLCMAPILFFAISASLKVPLITVSKAKILLVLFYPINSCANPFLYAIFTKNFRRDFFVLMSKFGCYEVQAQIYKTETSSITHNFHSRKNPCSSAPRVTNSYVLVPLNHSVQN</sequence>
<accession>P35378</accession>
<accession>Q9D4C2</accession>
<accession>Q9QWV8</accession>
<gene>
    <name type="primary">Fshr</name>
</gene>
<keyword id="KW-1003">Cell membrane</keyword>
<keyword id="KW-1015">Disulfide bond</keyword>
<keyword id="KW-0297">G-protein coupled receptor</keyword>
<keyword id="KW-0325">Glycoprotein</keyword>
<keyword id="KW-0433">Leucine-rich repeat</keyword>
<keyword id="KW-0472">Membrane</keyword>
<keyword id="KW-0675">Receptor</keyword>
<keyword id="KW-1185">Reference proteome</keyword>
<keyword id="KW-0677">Repeat</keyword>
<keyword id="KW-0732">Signal</keyword>
<keyword id="KW-0765">Sulfation</keyword>
<keyword id="KW-0807">Transducer</keyword>
<keyword id="KW-0812">Transmembrane</keyword>
<keyword id="KW-1133">Transmembrane helix</keyword>
<feature type="signal peptide" evidence="4">
    <location>
        <begin position="1"/>
        <end position="17"/>
    </location>
</feature>
<feature type="chain" id="PRO_0000012773" description="Follicle-stimulating hormone receptor">
    <location>
        <begin position="18"/>
        <end position="692"/>
    </location>
</feature>
<feature type="topological domain" description="Extracellular" evidence="4">
    <location>
        <begin position="18"/>
        <end position="365"/>
    </location>
</feature>
<feature type="transmembrane region" description="Helical; Name=1" evidence="4">
    <location>
        <begin position="366"/>
        <end position="386"/>
    </location>
</feature>
<feature type="topological domain" description="Cytoplasmic" evidence="4">
    <location>
        <begin position="387"/>
        <end position="397"/>
    </location>
</feature>
<feature type="transmembrane region" description="Helical; Name=2" evidence="4">
    <location>
        <begin position="398"/>
        <end position="420"/>
    </location>
</feature>
<feature type="topological domain" description="Extracellular" evidence="4">
    <location>
        <begin position="421"/>
        <end position="442"/>
    </location>
</feature>
<feature type="transmembrane region" description="Helical; Name=3" evidence="4">
    <location>
        <begin position="443"/>
        <end position="464"/>
    </location>
</feature>
<feature type="topological domain" description="Cytoplasmic" evidence="4">
    <location>
        <begin position="465"/>
        <end position="484"/>
    </location>
</feature>
<feature type="transmembrane region" description="Helical; Name=4" evidence="4">
    <location>
        <begin position="485"/>
        <end position="507"/>
    </location>
</feature>
<feature type="topological domain" description="Extracellular" evidence="4">
    <location>
        <begin position="508"/>
        <end position="527"/>
    </location>
</feature>
<feature type="transmembrane region" description="Helical; Name=5" evidence="4">
    <location>
        <begin position="528"/>
        <end position="549"/>
    </location>
</feature>
<feature type="topological domain" description="Cytoplasmic" evidence="4">
    <location>
        <begin position="550"/>
        <end position="572"/>
    </location>
</feature>
<feature type="transmembrane region" description="Helical; Name=6" evidence="4">
    <location>
        <begin position="573"/>
        <end position="596"/>
    </location>
</feature>
<feature type="topological domain" description="Extracellular" evidence="4">
    <location>
        <begin position="597"/>
        <end position="607"/>
    </location>
</feature>
<feature type="transmembrane region" description="Helical; Name=7" evidence="4">
    <location>
        <begin position="608"/>
        <end position="629"/>
    </location>
</feature>
<feature type="topological domain" description="Cytoplasmic" evidence="4">
    <location>
        <begin position="630"/>
        <end position="692"/>
    </location>
</feature>
<feature type="domain" description="LRRNT">
    <location>
        <begin position="18"/>
        <end position="46"/>
    </location>
</feature>
<feature type="repeat" description="LRR 1">
    <location>
        <begin position="49"/>
        <end position="72"/>
    </location>
</feature>
<feature type="repeat" description="LRR 2">
    <location>
        <begin position="73"/>
        <end position="97"/>
    </location>
</feature>
<feature type="repeat" description="LRR 3">
    <location>
        <begin position="98"/>
        <end position="118"/>
    </location>
</feature>
<feature type="repeat" description="LRR 4">
    <location>
        <begin position="119"/>
        <end position="143"/>
    </location>
</feature>
<feature type="repeat" description="LRR 5">
    <location>
        <begin position="144"/>
        <end position="169"/>
    </location>
</feature>
<feature type="repeat" description="LRR 6">
    <location>
        <begin position="170"/>
        <end position="192"/>
    </location>
</feature>
<feature type="repeat" description="LRR 7">
    <location>
        <begin position="193"/>
        <end position="216"/>
    </location>
</feature>
<feature type="repeat" description="LRR 8">
    <location>
        <begin position="217"/>
        <end position="240"/>
    </location>
</feature>
<feature type="repeat" description="LRR 9">
    <location>
        <begin position="241"/>
        <end position="259"/>
    </location>
</feature>
<feature type="modified residue" description="Sulfotyrosine" evidence="3">
    <location>
        <position position="334"/>
    </location>
</feature>
<feature type="glycosylation site" description="N-linked (GlcNAc...) asparagine" evidence="1">
    <location>
        <position position="191"/>
    </location>
</feature>
<feature type="glycosylation site" description="N-linked (GlcNAc...) asparagine" evidence="4">
    <location>
        <position position="199"/>
    </location>
</feature>
<feature type="glycosylation site" description="N-linked (GlcNAc...) asparagine" evidence="1">
    <location>
        <position position="293"/>
    </location>
</feature>
<feature type="disulfide bond" evidence="5">
    <location>
        <begin position="18"/>
        <end position="25"/>
    </location>
</feature>
<feature type="disulfide bond" evidence="5">
    <location>
        <begin position="23"/>
        <end position="32"/>
    </location>
</feature>
<feature type="disulfide bond" evidence="3">
    <location>
        <begin position="275"/>
        <end position="345"/>
    </location>
</feature>
<feature type="disulfide bond" evidence="3">
    <location>
        <begin position="276"/>
        <end position="355"/>
    </location>
</feature>
<feature type="disulfide bond" evidence="3">
    <location>
        <begin position="276"/>
        <end position="292"/>
    </location>
</feature>
<feature type="disulfide bond" evidence="3">
    <location>
        <begin position="292"/>
        <end position="337"/>
    </location>
</feature>
<feature type="disulfide bond" evidence="5">
    <location>
        <begin position="441"/>
        <end position="516"/>
    </location>
</feature>
<feature type="sequence conflict" description="In Ref. 2; BAB30351." evidence="6" ref="2">
    <original>Q</original>
    <variation>K</variation>
    <location>
        <position position="436"/>
    </location>
</feature>
<proteinExistence type="evidence at transcript level"/>
<evidence type="ECO:0000250" key="1"/>
<evidence type="ECO:0000250" key="2">
    <source>
        <dbReference type="UniProtKB" id="P20395"/>
    </source>
</evidence>
<evidence type="ECO:0000250" key="3">
    <source>
        <dbReference type="UniProtKB" id="P23945"/>
    </source>
</evidence>
<evidence type="ECO:0000255" key="4"/>
<evidence type="ECO:0000255" key="5">
    <source>
        <dbReference type="PROSITE-ProRule" id="PRU00521"/>
    </source>
</evidence>
<evidence type="ECO:0000305" key="6"/>
<dbReference type="EMBL" id="AF095642">
    <property type="protein sequence ID" value="AAC67559.1"/>
    <property type="molecule type" value="mRNA"/>
</dbReference>
<dbReference type="EMBL" id="AK016635">
    <property type="protein sequence ID" value="BAB30351.1"/>
    <property type="molecule type" value="mRNA"/>
</dbReference>
<dbReference type="EMBL" id="S49632">
    <property type="protein sequence ID" value="AAB24401.1"/>
    <property type="molecule type" value="Genomic_DNA"/>
</dbReference>
<dbReference type="EMBL" id="M87570">
    <property type="protein sequence ID" value="AAA37641.1"/>
    <property type="molecule type" value="Genomic_DNA"/>
</dbReference>
<dbReference type="CCDS" id="CCDS29026.1"/>
<dbReference type="PIR" id="I57670">
    <property type="entry name" value="I57670"/>
</dbReference>
<dbReference type="RefSeq" id="NP_038551.3">
    <property type="nucleotide sequence ID" value="NM_013523.3"/>
</dbReference>
<dbReference type="SMR" id="P35378"/>
<dbReference type="FunCoup" id="P35378">
    <property type="interactions" value="568"/>
</dbReference>
<dbReference type="STRING" id="10090.ENSMUSP00000040477"/>
<dbReference type="GlyCosmos" id="P35378">
    <property type="glycosylation" value="3 sites, No reported glycans"/>
</dbReference>
<dbReference type="GlyGen" id="P35378">
    <property type="glycosylation" value="3 sites"/>
</dbReference>
<dbReference type="PhosphoSitePlus" id="P35378"/>
<dbReference type="PaxDb" id="10090-ENSMUSP00000040477"/>
<dbReference type="Antibodypedia" id="15300">
    <property type="antibodies" value="686 antibodies from 37 providers"/>
</dbReference>
<dbReference type="DNASU" id="14309"/>
<dbReference type="Ensembl" id="ENSMUST00000035701.6">
    <property type="protein sequence ID" value="ENSMUSP00000040477.5"/>
    <property type="gene ID" value="ENSMUSG00000032937.6"/>
</dbReference>
<dbReference type="GeneID" id="14309"/>
<dbReference type="KEGG" id="mmu:14309"/>
<dbReference type="UCSC" id="uc008dvx.1">
    <property type="organism name" value="mouse"/>
</dbReference>
<dbReference type="AGR" id="MGI:95583"/>
<dbReference type="CTD" id="2492"/>
<dbReference type="MGI" id="MGI:95583">
    <property type="gene designation" value="Fshr"/>
</dbReference>
<dbReference type="VEuPathDB" id="HostDB:ENSMUSG00000032937"/>
<dbReference type="eggNOG" id="KOG2087">
    <property type="taxonomic scope" value="Eukaryota"/>
</dbReference>
<dbReference type="GeneTree" id="ENSGT00940000158952"/>
<dbReference type="HOGENOM" id="CLU_006130_1_1_1"/>
<dbReference type="InParanoid" id="P35378"/>
<dbReference type="OMA" id="DIMGHAI"/>
<dbReference type="OrthoDB" id="5981530at2759"/>
<dbReference type="PhylomeDB" id="P35378"/>
<dbReference type="TreeFam" id="TF316814"/>
<dbReference type="Reactome" id="R-MMU-375281">
    <property type="pathway name" value="Hormone ligand-binding receptors"/>
</dbReference>
<dbReference type="Reactome" id="R-MMU-418555">
    <property type="pathway name" value="G alpha (s) signalling events"/>
</dbReference>
<dbReference type="BioGRID-ORCS" id="14309">
    <property type="hits" value="4 hits in 78 CRISPR screens"/>
</dbReference>
<dbReference type="ChiTaRS" id="Fshr">
    <property type="organism name" value="mouse"/>
</dbReference>
<dbReference type="PRO" id="PR:P35378"/>
<dbReference type="Proteomes" id="UP000000589">
    <property type="component" value="Chromosome 17"/>
</dbReference>
<dbReference type="RNAct" id="P35378">
    <property type="molecule type" value="protein"/>
</dbReference>
<dbReference type="Bgee" id="ENSMUSG00000032937">
    <property type="expression patterns" value="Expressed in cumulus cell and 15 other cell types or tissues"/>
</dbReference>
<dbReference type="ExpressionAtlas" id="P35378">
    <property type="expression patterns" value="baseline and differential"/>
</dbReference>
<dbReference type="GO" id="GO:0009986">
    <property type="term" value="C:cell surface"/>
    <property type="evidence" value="ECO:0000314"/>
    <property type="project" value="MGI"/>
</dbReference>
<dbReference type="GO" id="GO:0005768">
    <property type="term" value="C:endosome"/>
    <property type="evidence" value="ECO:0007669"/>
    <property type="project" value="Ensembl"/>
</dbReference>
<dbReference type="GO" id="GO:0016020">
    <property type="term" value="C:membrane"/>
    <property type="evidence" value="ECO:0000250"/>
    <property type="project" value="UniProtKB"/>
</dbReference>
<dbReference type="GO" id="GO:0005886">
    <property type="term" value="C:plasma membrane"/>
    <property type="evidence" value="ECO:0000250"/>
    <property type="project" value="UniProtKB"/>
</dbReference>
<dbReference type="GO" id="GO:0043235">
    <property type="term" value="C:receptor complex"/>
    <property type="evidence" value="ECO:0000250"/>
    <property type="project" value="UniProtKB"/>
</dbReference>
<dbReference type="GO" id="GO:0004963">
    <property type="term" value="F:follicle-stimulating hormone receptor activity"/>
    <property type="evidence" value="ECO:0000314"/>
    <property type="project" value="MGI"/>
</dbReference>
<dbReference type="GO" id="GO:0004930">
    <property type="term" value="F:G protein-coupled receptor activity"/>
    <property type="evidence" value="ECO:0007669"/>
    <property type="project" value="UniProtKB-KW"/>
</dbReference>
<dbReference type="GO" id="GO:0017046">
    <property type="term" value="F:peptide hormone binding"/>
    <property type="evidence" value="ECO:0007669"/>
    <property type="project" value="Ensembl"/>
</dbReference>
<dbReference type="GO" id="GO:0007189">
    <property type="term" value="P:adenylate cyclase-activating G protein-coupled receptor signaling pathway"/>
    <property type="evidence" value="ECO:0007669"/>
    <property type="project" value="Ensembl"/>
</dbReference>
<dbReference type="GO" id="GO:0007193">
    <property type="term" value="P:adenylate cyclase-inhibiting G protein-coupled receptor signaling pathway"/>
    <property type="evidence" value="ECO:0000314"/>
    <property type="project" value="MGI"/>
</dbReference>
<dbReference type="GO" id="GO:0007188">
    <property type="term" value="P:adenylate cyclase-modulating G protein-coupled receptor signaling pathway"/>
    <property type="evidence" value="ECO:0000314"/>
    <property type="project" value="MGI"/>
</dbReference>
<dbReference type="GO" id="GO:0071711">
    <property type="term" value="P:basement membrane organization"/>
    <property type="evidence" value="ECO:0000315"/>
    <property type="project" value="MGI"/>
</dbReference>
<dbReference type="GO" id="GO:0071372">
    <property type="term" value="P:cellular response to follicle-stimulating hormone stimulus"/>
    <property type="evidence" value="ECO:0000250"/>
    <property type="project" value="UniProtKB"/>
</dbReference>
<dbReference type="GO" id="GO:0042699">
    <property type="term" value="P:follicle-stimulating hormone signaling pathway"/>
    <property type="evidence" value="ECO:0000314"/>
    <property type="project" value="MGI"/>
</dbReference>
<dbReference type="GO" id="GO:0009992">
    <property type="term" value="P:intracellular water homeostasis"/>
    <property type="evidence" value="ECO:0000315"/>
    <property type="project" value="MGI"/>
</dbReference>
<dbReference type="GO" id="GO:0007626">
    <property type="term" value="P:locomotory behavior"/>
    <property type="evidence" value="ECO:0000315"/>
    <property type="project" value="MGI"/>
</dbReference>
<dbReference type="GO" id="GO:0045779">
    <property type="term" value="P:negative regulation of bone resorption"/>
    <property type="evidence" value="ECO:0000315"/>
    <property type="project" value="MGI"/>
</dbReference>
<dbReference type="GO" id="GO:0031175">
    <property type="term" value="P:neuron projection development"/>
    <property type="evidence" value="ECO:0000315"/>
    <property type="project" value="MGI"/>
</dbReference>
<dbReference type="GO" id="GO:0001541">
    <property type="term" value="P:ovarian follicle development"/>
    <property type="evidence" value="ECO:0000315"/>
    <property type="project" value="MGI"/>
</dbReference>
<dbReference type="GO" id="GO:0022602">
    <property type="term" value="P:ovulation cycle process"/>
    <property type="evidence" value="ECO:0000315"/>
    <property type="project" value="MGI"/>
</dbReference>
<dbReference type="GO" id="GO:0007200">
    <property type="term" value="P:phospholipase C-activating G protein-coupled receptor signaling pathway"/>
    <property type="evidence" value="ECO:0000314"/>
    <property type="project" value="MGI"/>
</dbReference>
<dbReference type="GO" id="GO:0070374">
    <property type="term" value="P:positive regulation of ERK1 and ERK2 cascade"/>
    <property type="evidence" value="ECO:0000250"/>
    <property type="project" value="UniProtKB"/>
</dbReference>
<dbReference type="GO" id="GO:0033148">
    <property type="term" value="P:positive regulation of intracellular estrogen receptor signaling pathway"/>
    <property type="evidence" value="ECO:0000315"/>
    <property type="project" value="MGI"/>
</dbReference>
<dbReference type="GO" id="GO:0051897">
    <property type="term" value="P:positive regulation of phosphatidylinositol 3-kinase/protein kinase B signal transduction"/>
    <property type="evidence" value="ECO:0000250"/>
    <property type="project" value="UniProtKB"/>
</dbReference>
<dbReference type="GO" id="GO:0001545">
    <property type="term" value="P:primary ovarian follicle growth"/>
    <property type="evidence" value="ECO:0000315"/>
    <property type="project" value="MGI"/>
</dbReference>
<dbReference type="GO" id="GO:0060408">
    <property type="term" value="P:regulation of acetylcholine metabolic process"/>
    <property type="evidence" value="ECO:0000316"/>
    <property type="project" value="MGI"/>
</dbReference>
<dbReference type="GO" id="GO:0033044">
    <property type="term" value="P:regulation of chromosome organization"/>
    <property type="evidence" value="ECO:0000315"/>
    <property type="project" value="MGI"/>
</dbReference>
<dbReference type="GO" id="GO:0032350">
    <property type="term" value="P:regulation of hormone metabolic process"/>
    <property type="evidence" value="ECO:0000315"/>
    <property type="project" value="MGI"/>
</dbReference>
<dbReference type="GO" id="GO:0033146">
    <property type="term" value="P:regulation of intracellular estrogen receptor signaling pathway"/>
    <property type="evidence" value="ECO:0000315"/>
    <property type="project" value="MGI"/>
</dbReference>
<dbReference type="GO" id="GO:0043408">
    <property type="term" value="P:regulation of MAPK cascade"/>
    <property type="evidence" value="ECO:0000315"/>
    <property type="project" value="MGI"/>
</dbReference>
<dbReference type="GO" id="GO:0045670">
    <property type="term" value="P:regulation of osteoclast differentiation"/>
    <property type="evidence" value="ECO:0000315"/>
    <property type="project" value="MGI"/>
</dbReference>
<dbReference type="GO" id="GO:0010640">
    <property type="term" value="P:regulation of platelet-derived growth factor receptor signaling pathway"/>
    <property type="evidence" value="ECO:0000315"/>
    <property type="project" value="MGI"/>
</dbReference>
<dbReference type="GO" id="GO:0010738">
    <property type="term" value="P:regulation of protein kinase A signaling"/>
    <property type="evidence" value="ECO:0000250"/>
    <property type="project" value="UniProtKB"/>
</dbReference>
<dbReference type="GO" id="GO:0003073">
    <property type="term" value="P:regulation of systemic arterial blood pressure"/>
    <property type="evidence" value="ECO:0000315"/>
    <property type="project" value="MGI"/>
</dbReference>
<dbReference type="GO" id="GO:0060009">
    <property type="term" value="P:Sertoli cell development"/>
    <property type="evidence" value="ECO:0000315"/>
    <property type="project" value="MGI"/>
</dbReference>
<dbReference type="GO" id="GO:0060011">
    <property type="term" value="P:Sertoli cell proliferation"/>
    <property type="evidence" value="ECO:0000315"/>
    <property type="project" value="MGI"/>
</dbReference>
<dbReference type="GO" id="GO:0035092">
    <property type="term" value="P:sperm DNA condensation"/>
    <property type="evidence" value="ECO:0000315"/>
    <property type="project" value="MGI"/>
</dbReference>
<dbReference type="GO" id="GO:0007286">
    <property type="term" value="P:spermatid development"/>
    <property type="evidence" value="ECO:0000315"/>
    <property type="project" value="MGI"/>
</dbReference>
<dbReference type="GO" id="GO:0007283">
    <property type="term" value="P:spermatogenesis"/>
    <property type="evidence" value="ECO:0000315"/>
    <property type="project" value="MGI"/>
</dbReference>
<dbReference type="GO" id="GO:0045056">
    <property type="term" value="P:transcytosis"/>
    <property type="evidence" value="ECO:0007669"/>
    <property type="project" value="Ensembl"/>
</dbReference>
<dbReference type="GO" id="GO:0060065">
    <property type="term" value="P:uterus development"/>
    <property type="evidence" value="ECO:0000315"/>
    <property type="project" value="MGI"/>
</dbReference>
<dbReference type="FunFam" id="1.20.1070.10:FF:000019">
    <property type="entry name" value="Lutropin-choriogonadotropic hormone receptor"/>
    <property type="match status" value="1"/>
</dbReference>
<dbReference type="Gene3D" id="1.20.1070.10">
    <property type="entry name" value="Rhodopsin 7-helix transmembrane proteins"/>
    <property type="match status" value="1"/>
</dbReference>
<dbReference type="Gene3D" id="3.80.10.10">
    <property type="entry name" value="Ribonuclease Inhibitor"/>
    <property type="match status" value="1"/>
</dbReference>
<dbReference type="InterPro" id="IPR002272">
    <property type="entry name" value="FSH_rcpt"/>
</dbReference>
<dbReference type="InterPro" id="IPR024635">
    <property type="entry name" value="GnHR_TM"/>
</dbReference>
<dbReference type="InterPro" id="IPR000276">
    <property type="entry name" value="GPCR_Rhodpsn"/>
</dbReference>
<dbReference type="InterPro" id="IPR017452">
    <property type="entry name" value="GPCR_Rhodpsn_7TM"/>
</dbReference>
<dbReference type="InterPro" id="IPR002131">
    <property type="entry name" value="Gphrmn_rcpt_fam"/>
</dbReference>
<dbReference type="InterPro" id="IPR026906">
    <property type="entry name" value="LRR_5"/>
</dbReference>
<dbReference type="InterPro" id="IPR032675">
    <property type="entry name" value="LRR_dom_sf"/>
</dbReference>
<dbReference type="InterPro" id="IPR000372">
    <property type="entry name" value="LRRNT"/>
</dbReference>
<dbReference type="PANTHER" id="PTHR24372:SF5">
    <property type="entry name" value="FOLLICLE-STIMULATING HORMONE RECEPTOR"/>
    <property type="match status" value="1"/>
</dbReference>
<dbReference type="PANTHER" id="PTHR24372">
    <property type="entry name" value="GLYCOPROTEIN HORMONE RECEPTOR"/>
    <property type="match status" value="1"/>
</dbReference>
<dbReference type="Pfam" id="PF00001">
    <property type="entry name" value="7tm_1"/>
    <property type="match status" value="1"/>
</dbReference>
<dbReference type="Pfam" id="PF12369">
    <property type="entry name" value="GnHR_trans"/>
    <property type="match status" value="1"/>
</dbReference>
<dbReference type="Pfam" id="PF13306">
    <property type="entry name" value="LRR_5"/>
    <property type="match status" value="2"/>
</dbReference>
<dbReference type="Pfam" id="PF01462">
    <property type="entry name" value="LRRNT"/>
    <property type="match status" value="1"/>
</dbReference>
<dbReference type="PRINTS" id="PR01143">
    <property type="entry name" value="FSHRECEPTOR"/>
</dbReference>
<dbReference type="PRINTS" id="PR00373">
    <property type="entry name" value="GLYCHORMONER"/>
</dbReference>
<dbReference type="PRINTS" id="PR00237">
    <property type="entry name" value="GPCRRHODOPSN"/>
</dbReference>
<dbReference type="SMART" id="SM00013">
    <property type="entry name" value="LRRNT"/>
    <property type="match status" value="1"/>
</dbReference>
<dbReference type="SUPFAM" id="SSF81321">
    <property type="entry name" value="Family A G protein-coupled receptor-like"/>
    <property type="match status" value="1"/>
</dbReference>
<dbReference type="SUPFAM" id="SSF52058">
    <property type="entry name" value="L domain-like"/>
    <property type="match status" value="1"/>
</dbReference>
<dbReference type="PROSITE" id="PS00237">
    <property type="entry name" value="G_PROTEIN_RECEP_F1_1"/>
    <property type="match status" value="1"/>
</dbReference>
<dbReference type="PROSITE" id="PS50262">
    <property type="entry name" value="G_PROTEIN_RECEP_F1_2"/>
    <property type="match status" value="1"/>
</dbReference>
<organism>
    <name type="scientific">Mus musculus</name>
    <name type="common">Mouse</name>
    <dbReference type="NCBI Taxonomy" id="10090"/>
    <lineage>
        <taxon>Eukaryota</taxon>
        <taxon>Metazoa</taxon>
        <taxon>Chordata</taxon>
        <taxon>Craniata</taxon>
        <taxon>Vertebrata</taxon>
        <taxon>Euteleostomi</taxon>
        <taxon>Mammalia</taxon>
        <taxon>Eutheria</taxon>
        <taxon>Euarchontoglires</taxon>
        <taxon>Glires</taxon>
        <taxon>Rodentia</taxon>
        <taxon>Myomorpha</taxon>
        <taxon>Muroidea</taxon>
        <taxon>Muridae</taxon>
        <taxon>Murinae</taxon>
        <taxon>Mus</taxon>
        <taxon>Mus</taxon>
    </lineage>
</organism>
<protein>
    <recommendedName>
        <fullName>Follicle-stimulating hormone receptor</fullName>
        <shortName>FSH-R</shortName>
    </recommendedName>
    <alternativeName>
        <fullName>Follitropin receptor</fullName>
    </alternativeName>
</protein>